<comment type="function">
    <text evidence="1">One of the components of the core complex of photosystem II (PSII). It binds chlorophyll and helps catalyze the primary light-induced photochemical processes of PSII. PSII is a light-driven water:plastoquinone oxidoreductase, using light energy to abstract electrons from H(2)O, generating O(2) and a proton gradient subsequently used for ATP formation.</text>
</comment>
<comment type="cofactor">
    <text evidence="1">Binds multiple chlorophylls. PSII binds additional chlorophylls, carotenoids and specific lipids.</text>
</comment>
<comment type="subunit">
    <text evidence="1">PSII is composed of 1 copy each of membrane proteins PsbA, PsbB, PsbC, PsbD, PsbE, PsbF, PsbH, PsbI, PsbJ, PsbK, PsbL, PsbM, PsbT, PsbX, PsbY, PsbZ, Psb30/Ycf12, at least 3 peripheral proteins of the oxygen-evolving complex and a large number of cofactors. It forms dimeric complexes.</text>
</comment>
<comment type="subcellular location">
    <subcellularLocation>
        <location evidence="1">Plastid</location>
        <location evidence="1">Chloroplast thylakoid membrane</location>
        <topology evidence="1">Multi-pass membrane protein</topology>
    </subcellularLocation>
</comment>
<comment type="similarity">
    <text evidence="1">Belongs to the PsbB/PsbC family. PsbB subfamily.</text>
</comment>
<protein>
    <recommendedName>
        <fullName evidence="1">Photosystem II CP47 reaction center protein</fullName>
    </recommendedName>
    <alternativeName>
        <fullName evidence="1">PSII 47 kDa protein</fullName>
    </alternativeName>
    <alternativeName>
        <fullName evidence="1">Protein CP-47</fullName>
    </alternativeName>
</protein>
<sequence length="508" mass="56055">MGLPWYRVHTVVLNDPGRLLAVHIMHTALVSGWAGSMALYELAVFDPSDPVLDPMWRQGMFVIPFMTRLGITNSWGGWSITGGTVTNPGIWSYEGVAGAHIVFSGLCFLAAIWHWVYWDLEIFRDERTGKPSLDLPKIFGIHLFLSGLACFGFGAFHVTGLYGPGIWVSDPYGLTGKVQSVSPAWGVEGFDPFVPGGIASHHIAAGTLGILAGLFHLSVRPPQRLYKGLRMGNIETVLSSSIAAVFFAAFVVAGTMWYGSATTPIELFGPTRYQWDQGYFQQEIYRRVGAGLAENQSLAEAWSKIPEKLAFYDYIGNNPAKGGLFRAGSMDNGDGIAVGWLGHPIFRDKEGRELFVRRMPTFFETFPVVLVDGDGIVRADVPFRRAESKYSVEQVGVTVEFYGGELNGVSYSDPATVKKYARRAQLGEIFELDRATLKSDGVFRSSPRGWFTFGHASFALLFFFGHIWHGARTLFRDVFAGIDPDLDAQVEFGAFQKLGDPTTKRQVV</sequence>
<gene>
    <name evidence="1" type="primary">psbB</name>
</gene>
<name>PSBB_NANDO</name>
<feature type="chain" id="PRO_0000359841" description="Photosystem II CP47 reaction center protein">
    <location>
        <begin position="1"/>
        <end position="508"/>
    </location>
</feature>
<feature type="transmembrane region" description="Helical" evidence="1">
    <location>
        <begin position="21"/>
        <end position="36"/>
    </location>
</feature>
<feature type="transmembrane region" description="Helical" evidence="1">
    <location>
        <begin position="101"/>
        <end position="115"/>
    </location>
</feature>
<feature type="transmembrane region" description="Helical" evidence="1">
    <location>
        <begin position="140"/>
        <end position="156"/>
    </location>
</feature>
<feature type="transmembrane region" description="Helical" evidence="1">
    <location>
        <begin position="203"/>
        <end position="218"/>
    </location>
</feature>
<feature type="transmembrane region" description="Helical" evidence="1">
    <location>
        <begin position="237"/>
        <end position="252"/>
    </location>
</feature>
<feature type="transmembrane region" description="Helical" evidence="1">
    <location>
        <begin position="457"/>
        <end position="472"/>
    </location>
</feature>
<reference key="1">
    <citation type="journal article" date="2006" name="BMC Plant Biol.">
        <title>Rapid and accurate pyrosequencing of angiosperm plastid genomes.</title>
        <authorList>
            <person name="Moore M.J."/>
            <person name="Dhingra A."/>
            <person name="Soltis P.S."/>
            <person name="Shaw R."/>
            <person name="Farmerie W.G."/>
            <person name="Folta K.M."/>
            <person name="Soltis D.E."/>
        </authorList>
    </citation>
    <scope>NUCLEOTIDE SEQUENCE [LARGE SCALE GENOMIC DNA]</scope>
</reference>
<dbReference type="EMBL" id="DQ923117">
    <property type="protein sequence ID" value="ABI49890.1"/>
    <property type="molecule type" value="Genomic_DNA"/>
</dbReference>
<dbReference type="RefSeq" id="YP_740676.1">
    <property type="nucleotide sequence ID" value="NC_008336.1"/>
</dbReference>
<dbReference type="SMR" id="Q09FT5"/>
<dbReference type="GeneID" id="4271687"/>
<dbReference type="GO" id="GO:0009535">
    <property type="term" value="C:chloroplast thylakoid membrane"/>
    <property type="evidence" value="ECO:0007669"/>
    <property type="project" value="UniProtKB-SubCell"/>
</dbReference>
<dbReference type="GO" id="GO:0009523">
    <property type="term" value="C:photosystem II"/>
    <property type="evidence" value="ECO:0007669"/>
    <property type="project" value="UniProtKB-KW"/>
</dbReference>
<dbReference type="GO" id="GO:0016168">
    <property type="term" value="F:chlorophyll binding"/>
    <property type="evidence" value="ECO:0007669"/>
    <property type="project" value="UniProtKB-UniRule"/>
</dbReference>
<dbReference type="GO" id="GO:0045156">
    <property type="term" value="F:electron transporter, transferring electrons within the cyclic electron transport pathway of photosynthesis activity"/>
    <property type="evidence" value="ECO:0007669"/>
    <property type="project" value="InterPro"/>
</dbReference>
<dbReference type="GO" id="GO:0009772">
    <property type="term" value="P:photosynthetic electron transport in photosystem II"/>
    <property type="evidence" value="ECO:0007669"/>
    <property type="project" value="InterPro"/>
</dbReference>
<dbReference type="FunFam" id="3.10.680.10:FF:000001">
    <property type="entry name" value="Photosystem II CP47 reaction center protein"/>
    <property type="match status" value="1"/>
</dbReference>
<dbReference type="Gene3D" id="3.10.680.10">
    <property type="entry name" value="Photosystem II CP47 reaction center protein"/>
    <property type="match status" value="1"/>
</dbReference>
<dbReference type="HAMAP" id="MF_01495">
    <property type="entry name" value="PSII_PsbB_CP47"/>
    <property type="match status" value="1"/>
</dbReference>
<dbReference type="InterPro" id="IPR000932">
    <property type="entry name" value="PS_antenna-like"/>
</dbReference>
<dbReference type="InterPro" id="IPR036001">
    <property type="entry name" value="PS_II_antenna-like_sf"/>
</dbReference>
<dbReference type="InterPro" id="IPR017486">
    <property type="entry name" value="PSII_PsbB"/>
</dbReference>
<dbReference type="NCBIfam" id="TIGR03039">
    <property type="entry name" value="PS_II_CP47"/>
    <property type="match status" value="1"/>
</dbReference>
<dbReference type="PANTHER" id="PTHR33180">
    <property type="entry name" value="PHOTOSYSTEM II CP43 REACTION CENTER PROTEIN"/>
    <property type="match status" value="1"/>
</dbReference>
<dbReference type="PANTHER" id="PTHR33180:SF37">
    <property type="entry name" value="PHOTOSYSTEM II CP43 REACTION CENTER PROTEIN"/>
    <property type="match status" value="1"/>
</dbReference>
<dbReference type="Pfam" id="PF00421">
    <property type="entry name" value="PSII"/>
    <property type="match status" value="1"/>
</dbReference>
<dbReference type="SUPFAM" id="SSF161077">
    <property type="entry name" value="Photosystem II antenna protein-like"/>
    <property type="match status" value="1"/>
</dbReference>
<accession>Q09FT5</accession>
<keyword id="KW-0148">Chlorophyll</keyword>
<keyword id="KW-0150">Chloroplast</keyword>
<keyword id="KW-0157">Chromophore</keyword>
<keyword id="KW-0472">Membrane</keyword>
<keyword id="KW-0602">Photosynthesis</keyword>
<keyword id="KW-0604">Photosystem II</keyword>
<keyword id="KW-0934">Plastid</keyword>
<keyword id="KW-0793">Thylakoid</keyword>
<keyword id="KW-0812">Transmembrane</keyword>
<keyword id="KW-1133">Transmembrane helix</keyword>
<evidence type="ECO:0000255" key="1">
    <source>
        <dbReference type="HAMAP-Rule" id="MF_01495"/>
    </source>
</evidence>
<organism>
    <name type="scientific">Nandina domestica</name>
    <name type="common">Heavenly bamboo</name>
    <dbReference type="NCBI Taxonomy" id="41776"/>
    <lineage>
        <taxon>Eukaryota</taxon>
        <taxon>Viridiplantae</taxon>
        <taxon>Streptophyta</taxon>
        <taxon>Embryophyta</taxon>
        <taxon>Tracheophyta</taxon>
        <taxon>Spermatophyta</taxon>
        <taxon>Magnoliopsida</taxon>
        <taxon>Ranunculales</taxon>
        <taxon>Berberidaceae</taxon>
        <taxon>Nandinoideae</taxon>
        <taxon>Nandineae</taxon>
        <taxon>Nandina</taxon>
    </lineage>
</organism>
<proteinExistence type="inferred from homology"/>
<geneLocation type="chloroplast"/>